<keyword id="KW-0067">ATP-binding</keyword>
<keyword id="KW-0963">Cytoplasm</keyword>
<keyword id="KW-0436">Ligase</keyword>
<keyword id="KW-0547">Nucleotide-binding</keyword>
<keyword id="KW-0566">Pantothenate biosynthesis</keyword>
<keyword id="KW-1185">Reference proteome</keyword>
<dbReference type="EC" id="6.3.2.1" evidence="1"/>
<dbReference type="EMBL" id="AE014184">
    <property type="protein sequence ID" value="AAO44160.1"/>
    <property type="molecule type" value="Genomic_DNA"/>
</dbReference>
<dbReference type="RefSeq" id="WP_011096041.1">
    <property type="nucleotide sequence ID" value="NC_004572.3"/>
</dbReference>
<dbReference type="SMR" id="Q83H08"/>
<dbReference type="STRING" id="203267.TWT_063"/>
<dbReference type="KEGG" id="twh:TWT_063"/>
<dbReference type="eggNOG" id="COG0414">
    <property type="taxonomic scope" value="Bacteria"/>
</dbReference>
<dbReference type="HOGENOM" id="CLU_047148_0_2_11"/>
<dbReference type="OrthoDB" id="9773087at2"/>
<dbReference type="UniPathway" id="UPA00028">
    <property type="reaction ID" value="UER00005"/>
</dbReference>
<dbReference type="Proteomes" id="UP000002200">
    <property type="component" value="Chromosome"/>
</dbReference>
<dbReference type="GO" id="GO:0005829">
    <property type="term" value="C:cytosol"/>
    <property type="evidence" value="ECO:0007669"/>
    <property type="project" value="TreeGrafter"/>
</dbReference>
<dbReference type="GO" id="GO:0005524">
    <property type="term" value="F:ATP binding"/>
    <property type="evidence" value="ECO:0007669"/>
    <property type="project" value="UniProtKB-KW"/>
</dbReference>
<dbReference type="GO" id="GO:0004592">
    <property type="term" value="F:pantoate-beta-alanine ligase activity"/>
    <property type="evidence" value="ECO:0007669"/>
    <property type="project" value="UniProtKB-UniRule"/>
</dbReference>
<dbReference type="GO" id="GO:0015940">
    <property type="term" value="P:pantothenate biosynthetic process"/>
    <property type="evidence" value="ECO:0007669"/>
    <property type="project" value="UniProtKB-UniRule"/>
</dbReference>
<dbReference type="CDD" id="cd00560">
    <property type="entry name" value="PanC"/>
    <property type="match status" value="1"/>
</dbReference>
<dbReference type="Gene3D" id="3.40.50.620">
    <property type="entry name" value="HUPs"/>
    <property type="match status" value="1"/>
</dbReference>
<dbReference type="Gene3D" id="3.30.1300.10">
    <property type="entry name" value="Pantoate-beta-alanine ligase, C-terminal domain"/>
    <property type="match status" value="1"/>
</dbReference>
<dbReference type="HAMAP" id="MF_00158">
    <property type="entry name" value="PanC"/>
    <property type="match status" value="1"/>
</dbReference>
<dbReference type="InterPro" id="IPR003721">
    <property type="entry name" value="Pantoate_ligase"/>
</dbReference>
<dbReference type="InterPro" id="IPR042176">
    <property type="entry name" value="Pantoate_ligase_C"/>
</dbReference>
<dbReference type="InterPro" id="IPR014729">
    <property type="entry name" value="Rossmann-like_a/b/a_fold"/>
</dbReference>
<dbReference type="PANTHER" id="PTHR21299">
    <property type="entry name" value="CYTIDYLATE KINASE/PANTOATE-BETA-ALANINE LIGASE"/>
    <property type="match status" value="1"/>
</dbReference>
<dbReference type="PANTHER" id="PTHR21299:SF1">
    <property type="entry name" value="PANTOATE--BETA-ALANINE LIGASE"/>
    <property type="match status" value="1"/>
</dbReference>
<dbReference type="Pfam" id="PF02569">
    <property type="entry name" value="Pantoate_ligase"/>
    <property type="match status" value="1"/>
</dbReference>
<dbReference type="SUPFAM" id="SSF52374">
    <property type="entry name" value="Nucleotidylyl transferase"/>
    <property type="match status" value="1"/>
</dbReference>
<name>PANC_TROWT</name>
<proteinExistence type="inferred from homology"/>
<comment type="function">
    <text evidence="1">Catalyzes the condensation of pantoate with beta-alanine in an ATP-dependent reaction via a pantoyl-adenylate intermediate.</text>
</comment>
<comment type="catalytic activity">
    <reaction evidence="1">
        <text>(R)-pantoate + beta-alanine + ATP = (R)-pantothenate + AMP + diphosphate + H(+)</text>
        <dbReference type="Rhea" id="RHEA:10912"/>
        <dbReference type="ChEBI" id="CHEBI:15378"/>
        <dbReference type="ChEBI" id="CHEBI:15980"/>
        <dbReference type="ChEBI" id="CHEBI:29032"/>
        <dbReference type="ChEBI" id="CHEBI:30616"/>
        <dbReference type="ChEBI" id="CHEBI:33019"/>
        <dbReference type="ChEBI" id="CHEBI:57966"/>
        <dbReference type="ChEBI" id="CHEBI:456215"/>
        <dbReference type="EC" id="6.3.2.1"/>
    </reaction>
</comment>
<comment type="pathway">
    <text evidence="1">Cofactor biosynthesis; (R)-pantothenate biosynthesis; (R)-pantothenate from (R)-pantoate and beta-alanine: step 1/1.</text>
</comment>
<comment type="subunit">
    <text evidence="1">Homodimer.</text>
</comment>
<comment type="subcellular location">
    <subcellularLocation>
        <location evidence="1">Cytoplasm</location>
    </subcellularLocation>
</comment>
<comment type="miscellaneous">
    <text evidence="1">The reaction proceeds by a bi uni uni bi ping pong mechanism.</text>
</comment>
<comment type="similarity">
    <text evidence="1">Belongs to the pantothenate synthetase family.</text>
</comment>
<accession>Q83H08</accession>
<reference key="1">
    <citation type="journal article" date="2003" name="Genome Res.">
        <title>Tropheryma whipplei twist: a human pathogenic Actinobacteria with a reduced genome.</title>
        <authorList>
            <person name="Raoult D."/>
            <person name="Ogata H."/>
            <person name="Audic S."/>
            <person name="Robert C."/>
            <person name="Suhre K."/>
            <person name="Drancourt M."/>
            <person name="Claverie J.-M."/>
        </authorList>
    </citation>
    <scope>NUCLEOTIDE SEQUENCE [LARGE SCALE GENOMIC DNA]</scope>
    <source>
        <strain>Twist</strain>
    </source>
</reference>
<feature type="chain" id="PRO_0000305572" description="Pantothenate synthetase">
    <location>
        <begin position="1"/>
        <end position="288"/>
    </location>
</feature>
<feature type="active site" description="Proton donor" evidence="1">
    <location>
        <position position="34"/>
    </location>
</feature>
<feature type="binding site" evidence="1">
    <location>
        <begin position="27"/>
        <end position="34"/>
    </location>
    <ligand>
        <name>ATP</name>
        <dbReference type="ChEBI" id="CHEBI:30616"/>
    </ligand>
</feature>
<feature type="binding site" evidence="1">
    <location>
        <position position="58"/>
    </location>
    <ligand>
        <name>(R)-pantoate</name>
        <dbReference type="ChEBI" id="CHEBI:15980"/>
    </ligand>
</feature>
<feature type="binding site" evidence="1">
    <location>
        <position position="58"/>
    </location>
    <ligand>
        <name>beta-alanine</name>
        <dbReference type="ChEBI" id="CHEBI:57966"/>
    </ligand>
</feature>
<feature type="binding site" evidence="1">
    <location>
        <position position="150"/>
    </location>
    <ligand>
        <name>(R)-pantoate</name>
        <dbReference type="ChEBI" id="CHEBI:15980"/>
    </ligand>
</feature>
<feature type="binding site" evidence="1">
    <location>
        <position position="173"/>
    </location>
    <ligand>
        <name>ATP</name>
        <dbReference type="ChEBI" id="CHEBI:30616"/>
    </ligand>
</feature>
<feature type="binding site" evidence="1">
    <location>
        <begin position="181"/>
        <end position="184"/>
    </location>
    <ligand>
        <name>ATP</name>
        <dbReference type="ChEBI" id="CHEBI:30616"/>
    </ligand>
</feature>
<evidence type="ECO:0000255" key="1">
    <source>
        <dbReference type="HAMAP-Rule" id="MF_00158"/>
    </source>
</evidence>
<organism>
    <name type="scientific">Tropheryma whipplei (strain Twist)</name>
    <name type="common">Whipple's bacillus</name>
    <dbReference type="NCBI Taxonomy" id="203267"/>
    <lineage>
        <taxon>Bacteria</taxon>
        <taxon>Bacillati</taxon>
        <taxon>Actinomycetota</taxon>
        <taxon>Actinomycetes</taxon>
        <taxon>Micrococcales</taxon>
        <taxon>Tropherymataceae</taxon>
        <taxon>Tropheryma</taxon>
    </lineage>
</organism>
<sequence length="288" mass="31992">MNLKLASSPHELRTCLAGRAFVLVPTMGALHEGHIWLVDMARRCNLPVVVSIFVNPLQFDDSLDLDTYPRTLEQDLEKLEGKAFAVYSPSVETMYPNGLDSIRIDPGPIGRILEGAIRPGFFDGILTIVAKLLLQTAPERVFFSKKDAQQAFLVRRMVRELAFPVRVEVTGFLRDKFSLPYSSRNRKLGVDAREKAQRLSQGLLSVVNNGPLTVRDCIDKITDLANSIGVDLGYAQILDENFCEIASDRMVTRAFHSEACIGLNTPLFLLAARVHGVRVVDNVDLVVV</sequence>
<protein>
    <recommendedName>
        <fullName evidence="1">Pantothenate synthetase</fullName>
        <shortName evidence="1">PS</shortName>
        <ecNumber evidence="1">6.3.2.1</ecNumber>
    </recommendedName>
    <alternativeName>
        <fullName evidence="1">Pantoate--beta-alanine ligase</fullName>
    </alternativeName>
    <alternativeName>
        <fullName evidence="1">Pantoate-activating enzyme</fullName>
    </alternativeName>
</protein>
<gene>
    <name evidence="1" type="primary">panC</name>
    <name type="ordered locus">TWT_063</name>
</gene>